<evidence type="ECO:0000250" key="1">
    <source>
        <dbReference type="UniProtKB" id="P18074"/>
    </source>
</evidence>
<evidence type="ECO:0000250" key="2">
    <source>
        <dbReference type="UniProtKB" id="Q96FC9"/>
    </source>
</evidence>
<evidence type="ECO:0000255" key="3">
    <source>
        <dbReference type="PROSITE-ProRule" id="PRU00541"/>
    </source>
</evidence>
<evidence type="ECO:0000256" key="4">
    <source>
        <dbReference type="SAM" id="MobiDB-lite"/>
    </source>
</evidence>
<evidence type="ECO:0000269" key="5">
    <source>
    </source>
</evidence>
<evidence type="ECO:0000269" key="6">
    <source>
    </source>
</evidence>
<evidence type="ECO:0000305" key="7"/>
<evidence type="ECO:0000312" key="8">
    <source>
        <dbReference type="MGI" id="MGI:2443590"/>
    </source>
</evidence>
<evidence type="ECO:0000312" key="9">
    <source>
        <dbReference type="Proteomes" id="UP000000589"/>
    </source>
</evidence>
<organism>
    <name type="scientific">Mus musculus</name>
    <name type="common">Mouse</name>
    <dbReference type="NCBI Taxonomy" id="10090"/>
    <lineage>
        <taxon>Eukaryota</taxon>
        <taxon>Metazoa</taxon>
        <taxon>Chordata</taxon>
        <taxon>Craniata</taxon>
        <taxon>Vertebrata</taxon>
        <taxon>Euteleostomi</taxon>
        <taxon>Mammalia</taxon>
        <taxon>Eutheria</taxon>
        <taxon>Euarchontoglires</taxon>
        <taxon>Glires</taxon>
        <taxon>Rodentia</taxon>
        <taxon>Myomorpha</taxon>
        <taxon>Muroidea</taxon>
        <taxon>Muridae</taxon>
        <taxon>Murinae</taxon>
        <taxon>Mus</taxon>
        <taxon>Mus</taxon>
    </lineage>
</organism>
<protein>
    <recommendedName>
        <fullName evidence="7">ATP-dependent DNA helicase DDX11</fullName>
        <ecNumber evidence="2">5.6.2.3</ecNumber>
    </recommendedName>
    <alternativeName>
        <fullName evidence="8">DEAD/H-box protein 11</fullName>
    </alternativeName>
    <alternativeName>
        <fullName evidence="7">DNA 5'-3' helicase DDX11</fullName>
    </alternativeName>
</protein>
<proteinExistence type="evidence at protein level"/>
<sequence>MADENQEIGGIHFPFPFPPYPIQKDFMAELYKVLEGGKIGIFESPTGTGKSLSLICGALSWLRDFEKKKLQAEALLLAPGSGPPSSEKNSLLTSSSCQEPTDTPRPAGEPDWVTEFVQKKEERDLVERLREEQVRRRKREERLKEVCQDGRLRFAAKRTKHEEEETEALLRLSREMLDAGTGPEQLEQLECGEEHLVLAEYESDEERRGSRVDEAEDDLEEEHITKIYYCSRTHSQLAQFVREVLKSPFGKETRLVSLGSRQTLCVNEDVKNLGSVQLMNDRCVDMQRSKREKNGTGEDKPKRKRQKIQTSCPFYNHEQMELLRDEILLEVKDMEQLVALGKEARACPYYGSRFAIPAAQLVVLPYPMLLHAATRQAAGIRLQGQVVIIDEAHNLIDTITNIHSTEVNGSQLCQAHSQLLQYMERYRKRLKAKNLMYIKQILYLLEKFVAVLGGNVKQNPTTQSLSQTGSELKSINDFLFQSQVDNINLFKVQRYLEKSMLSRKLFGFTECFGVVLPSLSDSQENRGLAGFQQFLKSLQSGPTEDSPEEGQAVALRPASPLMHIEAFLAALTTANQDGRVIVNRQGSVGQSSLKFLLLNPAVHFAQVVKECRAVVIAGGTMQPMSDFREQLLACSGVEAGRVVEFSCGHVIPPDNILPLIICSGPSNQQLEFTYQRRELPQMVEETGRILCNLCNVVPGGVVCFLPSYEYLRQVHAHWDKTGLLTRLSVRKKIFQEPKRASQVEQVLMAYSKCIMSCSHSEGHLTGALLLSVVGGKMSEGINFSDDLGRCVVMVGMPYPNIKSPELQEKMAYLNQTLPRTQGQPLPGTVLIENLCMKAINQSIGRAIRHQRDFASIVLLDHRYARPSILAKLPAWIRDRVEVKATFGPAFAAVRKFHREKSHPSLV</sequence>
<keyword id="KW-0004">4Fe-4S</keyword>
<keyword id="KW-0010">Activator</keyword>
<keyword id="KW-0067">ATP-binding</keyword>
<keyword id="KW-0963">Cytoplasm</keyword>
<keyword id="KW-0206">Cytoskeleton</keyword>
<keyword id="KW-0217">Developmental protein</keyword>
<keyword id="KW-0227">DNA damage</keyword>
<keyword id="KW-0234">DNA repair</keyword>
<keyword id="KW-0235">DNA replication</keyword>
<keyword id="KW-0238">DNA-binding</keyword>
<keyword id="KW-0347">Helicase</keyword>
<keyword id="KW-0378">Hydrolase</keyword>
<keyword id="KW-0408">Iron</keyword>
<keyword id="KW-0411">Iron-sulfur</keyword>
<keyword id="KW-0413">Isomerase</keyword>
<keyword id="KW-0479">Metal-binding</keyword>
<keyword id="KW-0547">Nucleotide-binding</keyword>
<keyword id="KW-0539">Nucleus</keyword>
<keyword id="KW-0597">Phosphoprotein</keyword>
<keyword id="KW-1185">Reference proteome</keyword>
<keyword id="KW-0694">RNA-binding</keyword>
<keyword id="KW-0804">Transcription</keyword>
<keyword id="KW-0805">Transcription regulation</keyword>
<comment type="function">
    <text evidence="2 5 6">DNA-dependent ATPase and ATP-dependent DNA helicase that participates in various functions in genomic stability, including DNA replication, DNA repair and heterochromatin organization as well as in ribosomal RNA synthesis. Its double-stranded DNA helicase activity requires either a minimal 5'-single-stranded tail length of approximately 15 nt (flap substrates) or 10 nt length single-stranded gapped DNA substrates of a partial duplex DNA structure for helicase loading and translocation along DNA in a 5' to 3' direction. The helicase activity is capable of displacing duplex regions up to 100 bp, which can be extended up to 500 bp by the replication protein A (RPA) or the cohesion CTF18-replication factor C (Ctf18-RFC) complex activities. Also shows ATPase- and helicase activities on substrates that mimic key DNA intermediates of replication, repair and homologous recombination reactions, including forked duplex, anti-parallel G-quadruplex and three-stranded D-loop DNA molecules. Plays a role in DNA double-strand break (DSB) repair at the DNA replication fork during DNA replication recovery from DNA damage. Recruited with TIMELESS factor upon DNA-replication stress response at DNA replication fork to preserve replication fork progression, and hence ensure DNA replication fidelity (By similarity). Also cooperates with TIMELESS factor during DNA replication to regulate proper sister chromatid cohesion and mitotic chromosome segregation (PubMed:17611414). Stimulates 5'-single-stranded DNA flap endonuclease activity of FEN1 in an ATP- and helicase-independent manner; and hence it may contribute in Okazaki fragment processing at DNA replication fork during lagging strand DNA synthesis. Its ability to function at DNA replication fork is modulated by its binding to long non-coding RNA (lncRNA) cohesion regulator non-coding RNA DDX11-AS1/CONCR, which is able to increase both DDX11 ATPase activity and binding to DNA replicating regions (By similarity). Also plays a role in heterochromatin organization (PubMed:21854770). Involved in rRNA transcription activation through binding to active hypomethylated rDNA gene loci by recruiting UBTF and the RNA polymerase Pol I transcriptional machinery (By similarity). Plays a role in embryonic development and prevention of aneuploidy (PubMed:17611414). Involved in melanoma cell proliferation and survival. Associates with chromatin at DNA replication fork regions. Binds to single- and double-stranded DNAs (By similarity).</text>
</comment>
<comment type="catalytic activity">
    <reaction evidence="2">
        <text>Couples ATP hydrolysis with the unwinding of duplex DNA at the replication fork by translocating in the 5'-3' direction. This creates two antiparallel DNA single strands (ssDNA). The leading ssDNA polymer is the template for DNA polymerase III holoenzyme which synthesizes a continuous strand.</text>
        <dbReference type="EC" id="5.6.2.3"/>
    </reaction>
</comment>
<comment type="catalytic activity">
    <reaction evidence="2">
        <text>ATP + H2O = ADP + phosphate + H(+)</text>
        <dbReference type="Rhea" id="RHEA:13065"/>
        <dbReference type="ChEBI" id="CHEBI:15377"/>
        <dbReference type="ChEBI" id="CHEBI:15378"/>
        <dbReference type="ChEBI" id="CHEBI:30616"/>
        <dbReference type="ChEBI" id="CHEBI:43474"/>
        <dbReference type="ChEBI" id="CHEBI:456216"/>
        <dbReference type="EC" id="5.6.2.3"/>
    </reaction>
</comment>
<comment type="cofactor">
    <cofactor evidence="1">
        <name>[4Fe-4S] cluster</name>
        <dbReference type="ChEBI" id="CHEBI:49883"/>
    </cofactor>
    <text evidence="1">Binds 1 [4Fe-4S] cluster.</text>
</comment>
<comment type="subunit">
    <text evidence="2">Associates with the CTF18-RFC complex. Associates with a cohesin complex composed of RAD21, SMC1 proteins and SMC3. Interacts with CHTF18. Interacts with DSCC1. Interacts with FEN1; this interaction is direct and increases flap endonuclease activity of FEN1. Interacts with PCNA. Interacts with POLR1A and UBTF. Interacts with RAD21, SMC1 proteins and SMC3. Interacts with RFC2. Interacts with TIMELESS; this interaction increases recruitment of both proteins onto chromatin in response to replication stress induction by hydroxyurea.</text>
</comment>
<comment type="subcellular location">
    <subcellularLocation>
        <location evidence="2">Nucleus</location>
    </subcellularLocation>
    <subcellularLocation>
        <location evidence="2">Nucleus</location>
        <location evidence="2">Nucleolus</location>
    </subcellularLocation>
    <subcellularLocation>
        <location evidence="2">Cytoplasm</location>
        <location evidence="2">Cytoskeleton</location>
        <location evidence="2">Spindle pole</location>
    </subcellularLocation>
    <subcellularLocation>
        <location evidence="2">Midbody</location>
    </subcellularLocation>
    <subcellularLocation>
        <location evidence="2">Cytoplasm</location>
        <location evidence="2">Cytoskeleton</location>
        <location evidence="2">Microtubule organizing center</location>
        <location evidence="2">Centrosome</location>
    </subcellularLocation>
    <text evidence="2">During the early stages of mitosis, localizes to condensed chromatin and is released from the chromatin with progression to metaphase. Also localizes to the spindle poles throughout mitosis and at the midbody at later stages of mitosis (metaphase to telophase). In interphase, colocalizes with nucleolin in the nucleolus.</text>
</comment>
<comment type="disruption phenotype">
    <text evidence="5 6">Embryonic death at 10.5 dpc (PubMed:17611414). Embryos are smaller in size, malformed and exhibit sparse cellularity in comparison to normal or heterozygous litter mates (PubMed:17611414). Show inability to form a proper embryonic placenta. Display high incidence of cell aneuploidy due to abnormal chromosomal segregation (PubMed:17611414). Show abnormal formation and localization of heterochromatin (PubMed:21854770).</text>
</comment>
<comment type="similarity">
    <text evidence="7">Belongs to the DEAD box helicase family. DEAH subfamily. DDX11/CHL1 sub-subfamily.</text>
</comment>
<comment type="sequence caution" evidence="7">
    <conflict type="miscellaneous discrepancy">
        <sequence resource="EMBL-CDS" id="AAH79656"/>
    </conflict>
    <text>Aberrant splicing.</text>
</comment>
<gene>
    <name evidence="8" type="primary">Ddx11</name>
</gene>
<accession>Q6AXC6</accession>
<accession>A0A286YDJ5</accession>
<name>DDX11_MOUSE</name>
<feature type="chain" id="PRO_0000055137" description="ATP-dependent DNA helicase DDX11">
    <location>
        <begin position="1"/>
        <end position="906"/>
    </location>
</feature>
<feature type="domain" description="Helicase ATP-binding" evidence="3">
    <location>
        <begin position="9"/>
        <end position="442"/>
    </location>
</feature>
<feature type="region of interest" description="Disordered" evidence="4">
    <location>
        <begin position="78"/>
        <end position="111"/>
    </location>
</feature>
<feature type="region of interest" description="Disordered" evidence="4">
    <location>
        <begin position="284"/>
        <end position="310"/>
    </location>
</feature>
<feature type="short sequence motif" description="DEAH box" evidence="3">
    <location>
        <begin position="390"/>
        <end position="393"/>
    </location>
</feature>
<feature type="compositionally biased region" description="Low complexity" evidence="4">
    <location>
        <begin position="85"/>
        <end position="96"/>
    </location>
</feature>
<feature type="compositionally biased region" description="Basic and acidic residues" evidence="4">
    <location>
        <begin position="284"/>
        <end position="301"/>
    </location>
</feature>
<feature type="binding site" evidence="3">
    <location>
        <begin position="44"/>
        <end position="51"/>
    </location>
    <ligand>
        <name>ATP</name>
        <dbReference type="ChEBI" id="CHEBI:30616"/>
    </ligand>
</feature>
<feature type="binding site" evidence="1">
    <location>
        <position position="265"/>
    </location>
    <ligand>
        <name>[4Fe-4S] cluster</name>
        <dbReference type="ChEBI" id="CHEBI:49883"/>
    </ligand>
</feature>
<feature type="binding site" evidence="1">
    <location>
        <position position="283"/>
    </location>
    <ligand>
        <name>[4Fe-4S] cluster</name>
        <dbReference type="ChEBI" id="CHEBI:49883"/>
    </ligand>
</feature>
<feature type="binding site" evidence="1">
    <location>
        <position position="312"/>
    </location>
    <ligand>
        <name>[4Fe-4S] cluster</name>
        <dbReference type="ChEBI" id="CHEBI:49883"/>
    </ligand>
</feature>
<feature type="binding site" evidence="1">
    <location>
        <position position="347"/>
    </location>
    <ligand>
        <name>[4Fe-4S] cluster</name>
        <dbReference type="ChEBI" id="CHEBI:49883"/>
    </ligand>
</feature>
<feature type="modified residue" description="Phosphoserine" evidence="2">
    <location>
        <position position="260"/>
    </location>
</feature>
<reference key="1">
    <citation type="journal article" date="2009" name="PLoS Biol.">
        <title>Lineage-specific biology revealed by a finished genome assembly of the mouse.</title>
        <authorList>
            <person name="Church D.M."/>
            <person name="Goodstadt L."/>
            <person name="Hillier L.W."/>
            <person name="Zody M.C."/>
            <person name="Goldstein S."/>
            <person name="She X."/>
            <person name="Bult C.J."/>
            <person name="Agarwala R."/>
            <person name="Cherry J.L."/>
            <person name="DiCuccio M."/>
            <person name="Hlavina W."/>
            <person name="Kapustin Y."/>
            <person name="Meric P."/>
            <person name="Maglott D."/>
            <person name="Birtle Z."/>
            <person name="Marques A.C."/>
            <person name="Graves T."/>
            <person name="Zhou S."/>
            <person name="Teague B."/>
            <person name="Potamousis K."/>
            <person name="Churas C."/>
            <person name="Place M."/>
            <person name="Herschleb J."/>
            <person name="Runnheim R."/>
            <person name="Forrest D."/>
            <person name="Amos-Landgraf J."/>
            <person name="Schwartz D.C."/>
            <person name="Cheng Z."/>
            <person name="Lindblad-Toh K."/>
            <person name="Eichler E.E."/>
            <person name="Ponting C.P."/>
        </authorList>
    </citation>
    <scope>NUCLEOTIDE SEQUENCE [LARGE SCALE GENOMIC DNA]</scope>
    <source>
        <strain evidence="9">C57BL/6J</strain>
    </source>
</reference>
<reference key="2">
    <citation type="journal article" date="2004" name="Genome Res.">
        <title>The status, quality, and expansion of the NIH full-length cDNA project: the Mammalian Gene Collection (MGC).</title>
        <authorList>
            <consortium name="The MGC Project Team"/>
        </authorList>
    </citation>
    <scope>NUCLEOTIDE SEQUENCE [LARGE SCALE MRNA]</scope>
    <source>
        <strain>C57BL/6J</strain>
        <tissue>Brain</tissue>
    </source>
</reference>
<reference key="3">
    <citation type="journal article" date="2007" name="Cell Cycle">
        <title>Loss of ChlR1 helicase in mouse causes lethality due to the accumulation of aneuploid cells generated by cohesion defects and placental malformation.</title>
        <authorList>
            <person name="Inoue A."/>
            <person name="Li T."/>
            <person name="Roby S.K."/>
            <person name="Valentine M.B."/>
            <person name="Inoue M."/>
            <person name="Boyd K."/>
            <person name="Kidd V.J."/>
            <person name="Lahti J.M."/>
        </authorList>
    </citation>
    <scope>DISRUPTION PHENOTYPE</scope>
    <scope>FUNCTION</scope>
</reference>
<reference key="4">
    <citation type="journal article" date="2010" name="Cell">
        <title>A tissue-specific atlas of mouse protein phosphorylation and expression.</title>
        <authorList>
            <person name="Huttlin E.L."/>
            <person name="Jedrychowski M.P."/>
            <person name="Elias J.E."/>
            <person name="Goswami T."/>
            <person name="Rad R."/>
            <person name="Beausoleil S.A."/>
            <person name="Villen J."/>
            <person name="Haas W."/>
            <person name="Sowa M.E."/>
            <person name="Gygi S.P."/>
        </authorList>
    </citation>
    <scope>IDENTIFICATION BY MASS SPECTROMETRY [LARGE SCALE ANALYSIS]</scope>
    <source>
        <tissue>Testis</tissue>
    </source>
</reference>
<reference key="5">
    <citation type="journal article" date="2011" name="Exp. Cell Res.">
        <title>Mammalian ChlR1 has a role in heterochromatin organization.</title>
        <authorList>
            <person name="Inoue A."/>
            <person name="Hyle J."/>
            <person name="Lechner M.S."/>
            <person name="Lahti J.M."/>
        </authorList>
    </citation>
    <scope>FUNCTION</scope>
    <scope>DISRUPTION PHENOTYPE</scope>
</reference>
<dbReference type="EC" id="5.6.2.3" evidence="2"/>
<dbReference type="EMBL" id="AC119957">
    <property type="status" value="NOT_ANNOTATED_CDS"/>
    <property type="molecule type" value="Genomic_DNA"/>
</dbReference>
<dbReference type="EMBL" id="CT025671">
    <property type="status" value="NOT_ANNOTATED_CDS"/>
    <property type="molecule type" value="Genomic_DNA"/>
</dbReference>
<dbReference type="EMBL" id="BC079656">
    <property type="protein sequence ID" value="AAH79656.1"/>
    <property type="status" value="ALT_SEQ"/>
    <property type="molecule type" value="mRNA"/>
</dbReference>
<dbReference type="CCDS" id="CCDS89137.1"/>
<dbReference type="RefSeq" id="NP_001003919.1">
    <property type="nucleotide sequence ID" value="NM_001003919.2"/>
</dbReference>
<dbReference type="RefSeq" id="NP_001335221.1">
    <property type="nucleotide sequence ID" value="NM_001348292.1"/>
</dbReference>
<dbReference type="RefSeq" id="XP_006524471.1">
    <property type="nucleotide sequence ID" value="XM_006524408.3"/>
</dbReference>
<dbReference type="RefSeq" id="XP_006524472.1">
    <property type="nucleotide sequence ID" value="XM_006524409.4"/>
</dbReference>
<dbReference type="FunCoup" id="Q6AXC6">
    <property type="interactions" value="2188"/>
</dbReference>
<dbReference type="STRING" id="10090.ENSMUSP00000130440"/>
<dbReference type="iPTMnet" id="Q6AXC6"/>
<dbReference type="PhosphoSitePlus" id="Q6AXC6"/>
<dbReference type="jPOST" id="Q6AXC6"/>
<dbReference type="PaxDb" id="10090-ENSMUSP00000130440"/>
<dbReference type="PeptideAtlas" id="Q6AXC6"/>
<dbReference type="ProteomicsDB" id="279848"/>
<dbReference type="ProteomicsDB" id="348808"/>
<dbReference type="Pumba" id="Q6AXC6"/>
<dbReference type="Antibodypedia" id="24573">
    <property type="antibodies" value="244 antibodies from 25 providers"/>
</dbReference>
<dbReference type="DNASU" id="320209"/>
<dbReference type="Ensembl" id="ENSMUST00000224497.2">
    <property type="protein sequence ID" value="ENSMUSP00000153436.2"/>
    <property type="gene ID" value="ENSMUSG00000035842.11"/>
</dbReference>
<dbReference type="GeneID" id="320209"/>
<dbReference type="KEGG" id="mmu:320209"/>
<dbReference type="UCSC" id="uc008dha.1">
    <property type="organism name" value="mouse"/>
</dbReference>
<dbReference type="AGR" id="MGI:2443590"/>
<dbReference type="CTD" id="1663"/>
<dbReference type="MGI" id="MGI:2443590">
    <property type="gene designation" value="Ddx11"/>
</dbReference>
<dbReference type="VEuPathDB" id="HostDB:ENSMUSG00000035842"/>
<dbReference type="eggNOG" id="KOG1133">
    <property type="taxonomic scope" value="Eukaryota"/>
</dbReference>
<dbReference type="GeneTree" id="ENSGT00950000182970"/>
<dbReference type="HOGENOM" id="CLU_006515_2_1_1"/>
<dbReference type="InParanoid" id="Q6AXC6"/>
<dbReference type="OrthoDB" id="267079at2759"/>
<dbReference type="PhylomeDB" id="Q6AXC6"/>
<dbReference type="TreeFam" id="TF300435"/>
<dbReference type="BioGRID-ORCS" id="320209">
    <property type="hits" value="27 hits in 113 CRISPR screens"/>
</dbReference>
<dbReference type="ChiTaRS" id="Ddx11">
    <property type="organism name" value="mouse"/>
</dbReference>
<dbReference type="PRO" id="PR:Q6AXC6"/>
<dbReference type="Proteomes" id="UP000000589">
    <property type="component" value="Chromosome 17"/>
</dbReference>
<dbReference type="RNAct" id="Q6AXC6">
    <property type="molecule type" value="protein"/>
</dbReference>
<dbReference type="Bgee" id="ENSMUSG00000035842">
    <property type="expression patterns" value="Expressed in primary oocyte and 146 other cell types or tissues"/>
</dbReference>
<dbReference type="ExpressionAtlas" id="Q6AXC6">
    <property type="expression patterns" value="baseline and differential"/>
</dbReference>
<dbReference type="GO" id="GO:0005813">
    <property type="term" value="C:centrosome"/>
    <property type="evidence" value="ECO:0000250"/>
    <property type="project" value="UniProtKB"/>
</dbReference>
<dbReference type="GO" id="GO:0000785">
    <property type="term" value="C:chromatin"/>
    <property type="evidence" value="ECO:0000250"/>
    <property type="project" value="UniProtKB"/>
</dbReference>
<dbReference type="GO" id="GO:0005737">
    <property type="term" value="C:cytoplasm"/>
    <property type="evidence" value="ECO:0007669"/>
    <property type="project" value="UniProtKB-KW"/>
</dbReference>
<dbReference type="GO" id="GO:0070062">
    <property type="term" value="C:extracellular exosome"/>
    <property type="evidence" value="ECO:0000250"/>
    <property type="project" value="UniProtKB"/>
</dbReference>
<dbReference type="GO" id="GO:0030496">
    <property type="term" value="C:midbody"/>
    <property type="evidence" value="ECO:0000250"/>
    <property type="project" value="UniProtKB"/>
</dbReference>
<dbReference type="GO" id="GO:0005730">
    <property type="term" value="C:nucleolus"/>
    <property type="evidence" value="ECO:0000250"/>
    <property type="project" value="UniProtKB"/>
</dbReference>
<dbReference type="GO" id="GO:0005654">
    <property type="term" value="C:nucleoplasm"/>
    <property type="evidence" value="ECO:0007669"/>
    <property type="project" value="Ensembl"/>
</dbReference>
<dbReference type="GO" id="GO:0000922">
    <property type="term" value="C:spindle pole"/>
    <property type="evidence" value="ECO:0000250"/>
    <property type="project" value="UniProtKB"/>
</dbReference>
<dbReference type="GO" id="GO:0051539">
    <property type="term" value="F:4 iron, 4 sulfur cluster binding"/>
    <property type="evidence" value="ECO:0007669"/>
    <property type="project" value="UniProtKB-KW"/>
</dbReference>
<dbReference type="GO" id="GO:0043139">
    <property type="term" value="F:5'-3' DNA helicase activity"/>
    <property type="evidence" value="ECO:0000250"/>
    <property type="project" value="UniProtKB"/>
</dbReference>
<dbReference type="GO" id="GO:0005524">
    <property type="term" value="F:ATP binding"/>
    <property type="evidence" value="ECO:0007669"/>
    <property type="project" value="UniProtKB-KW"/>
</dbReference>
<dbReference type="GO" id="GO:0016887">
    <property type="term" value="F:ATP hydrolysis activity"/>
    <property type="evidence" value="ECO:0007669"/>
    <property type="project" value="RHEA"/>
</dbReference>
<dbReference type="GO" id="GO:0008186">
    <property type="term" value="F:ATP-dependent activity, acting on RNA"/>
    <property type="evidence" value="ECO:0000250"/>
    <property type="project" value="UniProtKB"/>
</dbReference>
<dbReference type="GO" id="GO:0140640">
    <property type="term" value="F:catalytic activity, acting on a nucleic acid"/>
    <property type="evidence" value="ECO:0000250"/>
    <property type="project" value="UniProtKB"/>
</dbReference>
<dbReference type="GO" id="GO:0003682">
    <property type="term" value="F:chromatin binding"/>
    <property type="evidence" value="ECO:0000250"/>
    <property type="project" value="UniProtKB"/>
</dbReference>
<dbReference type="GO" id="GO:0003677">
    <property type="term" value="F:DNA binding"/>
    <property type="evidence" value="ECO:0000250"/>
    <property type="project" value="UniProtKB"/>
</dbReference>
<dbReference type="GO" id="GO:0003688">
    <property type="term" value="F:DNA replication origin binding"/>
    <property type="evidence" value="ECO:0000250"/>
    <property type="project" value="UniProtKB"/>
</dbReference>
<dbReference type="GO" id="GO:0003690">
    <property type="term" value="F:double-stranded DNA binding"/>
    <property type="evidence" value="ECO:0000250"/>
    <property type="project" value="UniProtKB"/>
</dbReference>
<dbReference type="GO" id="GO:0051880">
    <property type="term" value="F:G-quadruplex DNA binding"/>
    <property type="evidence" value="ECO:0000250"/>
    <property type="project" value="UniProtKB"/>
</dbReference>
<dbReference type="GO" id="GO:0004386">
    <property type="term" value="F:helicase activity"/>
    <property type="evidence" value="ECO:0000250"/>
    <property type="project" value="UniProtKB"/>
</dbReference>
<dbReference type="GO" id="GO:0046872">
    <property type="term" value="F:metal ion binding"/>
    <property type="evidence" value="ECO:0007669"/>
    <property type="project" value="UniProtKB-KW"/>
</dbReference>
<dbReference type="GO" id="GO:0003697">
    <property type="term" value="F:single-stranded DNA binding"/>
    <property type="evidence" value="ECO:0000250"/>
    <property type="project" value="UniProtKB"/>
</dbReference>
<dbReference type="GO" id="GO:0003727">
    <property type="term" value="F:single-stranded RNA binding"/>
    <property type="evidence" value="ECO:0000250"/>
    <property type="project" value="UniProtKB"/>
</dbReference>
<dbReference type="GO" id="GO:0045142">
    <property type="term" value="F:triplex DNA binding"/>
    <property type="evidence" value="ECO:0000250"/>
    <property type="project" value="UniProtKB"/>
</dbReference>
<dbReference type="GO" id="GO:1904976">
    <property type="term" value="P:cellular response to bleomycin"/>
    <property type="evidence" value="ECO:0000250"/>
    <property type="project" value="UniProtKB"/>
</dbReference>
<dbReference type="GO" id="GO:0072719">
    <property type="term" value="P:cellular response to cisplatin"/>
    <property type="evidence" value="ECO:0000250"/>
    <property type="project" value="UniProtKB"/>
</dbReference>
<dbReference type="GO" id="GO:0072711">
    <property type="term" value="P:cellular response to hydroxyurea"/>
    <property type="evidence" value="ECO:0000250"/>
    <property type="project" value="UniProtKB"/>
</dbReference>
<dbReference type="GO" id="GO:0006974">
    <property type="term" value="P:DNA damage response"/>
    <property type="evidence" value="ECO:0000250"/>
    <property type="project" value="UniProtKB"/>
</dbReference>
<dbReference type="GO" id="GO:0006281">
    <property type="term" value="P:DNA repair"/>
    <property type="evidence" value="ECO:0007669"/>
    <property type="project" value="UniProtKB-KW"/>
</dbReference>
<dbReference type="GO" id="GO:0032091">
    <property type="term" value="P:negative regulation of protein binding"/>
    <property type="evidence" value="ECO:0000250"/>
    <property type="project" value="UniProtKB"/>
</dbReference>
<dbReference type="GO" id="GO:1990700">
    <property type="term" value="P:nucleolar chromatin organization"/>
    <property type="evidence" value="ECO:0000250"/>
    <property type="project" value="UniProtKB"/>
</dbReference>
<dbReference type="GO" id="GO:0035563">
    <property type="term" value="P:positive regulation of chromatin binding"/>
    <property type="evidence" value="ECO:0000250"/>
    <property type="project" value="UniProtKB"/>
</dbReference>
<dbReference type="GO" id="GO:2000781">
    <property type="term" value="P:positive regulation of double-strand break repair"/>
    <property type="evidence" value="ECO:0000250"/>
    <property type="project" value="UniProtKB"/>
</dbReference>
<dbReference type="GO" id="GO:0045876">
    <property type="term" value="P:positive regulation of sister chromatid cohesion"/>
    <property type="evidence" value="ECO:0000250"/>
    <property type="project" value="UniProtKB"/>
</dbReference>
<dbReference type="GO" id="GO:1901838">
    <property type="term" value="P:positive regulation of transcription of nucleolar large rRNA by RNA polymerase I"/>
    <property type="evidence" value="ECO:0000250"/>
    <property type="project" value="UniProtKB"/>
</dbReference>
<dbReference type="GO" id="GO:0031297">
    <property type="term" value="P:replication fork processing"/>
    <property type="evidence" value="ECO:0000250"/>
    <property type="project" value="UniProtKB"/>
</dbReference>
<dbReference type="GO" id="GO:0007062">
    <property type="term" value="P:sister chromatid cohesion"/>
    <property type="evidence" value="ECO:0000250"/>
    <property type="project" value="UniProtKB"/>
</dbReference>
<dbReference type="CDD" id="cd18788">
    <property type="entry name" value="SF2_C_XPD"/>
    <property type="match status" value="1"/>
</dbReference>
<dbReference type="FunFam" id="3.40.50.300:FF:001050">
    <property type="entry name" value="ATP-dependent DNA helicase DDX11"/>
    <property type="match status" value="1"/>
</dbReference>
<dbReference type="FunFam" id="3.40.50.300:FF:000910">
    <property type="entry name" value="probable ATP-dependent DNA helicase DDX11"/>
    <property type="match status" value="1"/>
</dbReference>
<dbReference type="FunFam" id="3.40.50.300:FF:000909">
    <property type="entry name" value="Putative ATP-dependent RNA helicase DDX11"/>
    <property type="match status" value="1"/>
</dbReference>
<dbReference type="Gene3D" id="3.40.50.300">
    <property type="entry name" value="P-loop containing nucleotide triphosphate hydrolases"/>
    <property type="match status" value="3"/>
</dbReference>
<dbReference type="InterPro" id="IPR006555">
    <property type="entry name" value="ATP-dep_Helicase_C"/>
</dbReference>
<dbReference type="InterPro" id="IPR045028">
    <property type="entry name" value="DinG/Rad3-like"/>
</dbReference>
<dbReference type="InterPro" id="IPR014013">
    <property type="entry name" value="Helic_SF1/SF2_ATP-bd_DinG/Rad3"/>
</dbReference>
<dbReference type="InterPro" id="IPR006554">
    <property type="entry name" value="Helicase-like_DEXD_c2"/>
</dbReference>
<dbReference type="InterPro" id="IPR027417">
    <property type="entry name" value="P-loop_NTPase"/>
</dbReference>
<dbReference type="InterPro" id="IPR010614">
    <property type="entry name" value="RAD3-like_helicase_DEAD"/>
</dbReference>
<dbReference type="InterPro" id="IPR013020">
    <property type="entry name" value="Rad3/Chl1-like"/>
</dbReference>
<dbReference type="NCBIfam" id="TIGR00604">
    <property type="entry name" value="rad3"/>
    <property type="match status" value="1"/>
</dbReference>
<dbReference type="PANTHER" id="PTHR11472:SF41">
    <property type="entry name" value="ATP-DEPENDENT DNA HELICASE DDX11-RELATED"/>
    <property type="match status" value="1"/>
</dbReference>
<dbReference type="PANTHER" id="PTHR11472">
    <property type="entry name" value="DNA REPAIR DEAD HELICASE RAD3/XP-D SUBFAMILY MEMBER"/>
    <property type="match status" value="1"/>
</dbReference>
<dbReference type="Pfam" id="PF06733">
    <property type="entry name" value="DEAD_2"/>
    <property type="match status" value="1"/>
</dbReference>
<dbReference type="Pfam" id="PF13307">
    <property type="entry name" value="Helicase_C_2"/>
    <property type="match status" value="1"/>
</dbReference>
<dbReference type="SMART" id="SM00488">
    <property type="entry name" value="DEXDc2"/>
    <property type="match status" value="1"/>
</dbReference>
<dbReference type="SMART" id="SM00491">
    <property type="entry name" value="HELICc2"/>
    <property type="match status" value="1"/>
</dbReference>
<dbReference type="SUPFAM" id="SSF52540">
    <property type="entry name" value="P-loop containing nucleoside triphosphate hydrolases"/>
    <property type="match status" value="1"/>
</dbReference>
<dbReference type="PROSITE" id="PS51193">
    <property type="entry name" value="HELICASE_ATP_BIND_2"/>
    <property type="match status" value="1"/>
</dbReference>